<sequence>MLFSGGQYSPVGRPEEVLLIYKIFLVIICFHVILVTSLKENGNSSLLSPSAESSLVSLIPYSNGTPDAASEVLSTLNKTEKSKITIVKTFNASGVKSQRNICNLSSLCNDSVFFRGEIVFQHDEDHNVTQNQDTANGTFAGVLSLSELKRSELNKTLQTLSETYFIVCATAEAQSTVNCTFTVKLNETMNVCAMMVTFQTVQIRPMEQCCCSPRTPCPSSPEELEKLQCELQDPIVCLADQPHGPPLSSSSKPVVPQATIISHVASDFSLAEPLDHALMTPSTPSLTQESNLPSPQPTIPLASSPATDLPVQSVVVSSLPQTDLSHTLSPVQSSIPSPTTPAPSVPTELVTISTPPGETVVNTSTVSDLEAQVSQMEKALSLGSLEPNLAGEMVNRVSKLLHSPPALLAPLAQRLLKVVDAIGLQLNFSSTTISLTSPSLALAVIRVNASNFNTTTFAAQDPTNLQVSLETPPPENSIGAITLPSSLMNNLPANDVELASRIQFNFFETPALFQDPSLENLTLISYVISSSVTNMTIKNLTRNVTVALKHINPSPDDLTVKCVFWDLGRNGGKGGWSSDGCSVKDKRMNETICTCSHLTSFGILLDLSRTSLPPSQMMALTFITYIGCGLSSIFLSVTLVTYIAFEKIRRDYPSKILIQLCAALLLLNLIFLLDSWIALYNTRGFCIAVAVFLHYFLLVSFTWMGLEAFHMYLALVKVFNTYIRKYILKFCIVGWGIPAVVVSIVLTISPDNYGIGSYGKFPNGTPDDFCWINSNVVFYITVVGYFCVIFLLNVSMFIVVLVQLCRIKKKKQLGAQRKTSIQDLRSIAGLTFLLGITWGFAFFAWGPVNVTFMYLFAIFNTLQGFFIFIFYCAAKENVRKQWRRYLCCGKLRLAENSDWSKTATNGLKKQTVNQGVSSSSNSLQSSCNSTNSTTLLVNSDCSVHASGNGNASTERNGVSFSVQNGDVCLHDLTGKQHMFSDKEDSCNGKSRIALRRTSKRGSLHFIEQM</sequence>
<feature type="signal peptide" evidence="2">
    <location>
        <begin position="1"/>
        <end position="37"/>
    </location>
</feature>
<feature type="chain" id="PRO_0000012887" description="Adhesion G-protein coupled receptor G2">
    <location>
        <begin position="38"/>
        <end position="1009"/>
    </location>
</feature>
<feature type="chain" id="PRO_0000462375" description="Adhesion G-protein coupled receptor G2, N-terminal fragment" evidence="14">
    <location>
        <begin position="38"/>
        <end position="598"/>
    </location>
</feature>
<feature type="chain" id="PRO_0000462376" description="Adhesion G-protein coupled receptor G2, C-terminal fragment" evidence="14">
    <location>
        <begin position="599"/>
        <end position="1009"/>
    </location>
</feature>
<feature type="topological domain" description="Extracellular" evidence="8 9 16 17 18 19 20 21">
    <location>
        <begin position="38"/>
        <end position="617"/>
    </location>
</feature>
<feature type="transmembrane region" description="Helical; Name=1" evidence="8 9 16 17 18 19 20 21">
    <location>
        <begin position="618"/>
        <end position="640"/>
    </location>
</feature>
<feature type="topological domain" description="Cytoplasmic" evidence="8 9 16 17 18 19 20 21">
    <location>
        <begin position="641"/>
        <end position="655"/>
    </location>
</feature>
<feature type="transmembrane region" description="Helical; Name=2" evidence="8 9 16 17 18 19 20 21">
    <location>
        <begin position="656"/>
        <end position="679"/>
    </location>
</feature>
<feature type="topological domain" description="Extracellular" evidence="8 9 16 17 18 19 20 21">
    <location>
        <begin position="680"/>
        <end position="683"/>
    </location>
</feature>
<feature type="transmembrane region" description="Helical; Name=3" evidence="8 9 16 17 18 19 20 21">
    <location>
        <begin position="684"/>
        <end position="709"/>
    </location>
</feature>
<feature type="topological domain" description="Cytoplasmic" evidence="8 9 16 17 18 19 20 21">
    <location>
        <begin position="710"/>
        <end position="728"/>
    </location>
</feature>
<feature type="transmembrane region" description="Helical; Name=4" evidence="8 9 16 17 18 19 20 21">
    <location>
        <begin position="729"/>
        <end position="751"/>
    </location>
</feature>
<feature type="topological domain" description="Extracellular" evidence="8 9 16 17 18 19 20 21">
    <location>
        <begin position="752"/>
        <end position="776"/>
    </location>
</feature>
<feature type="transmembrane region" description="Helical; Name=5" evidence="8 9 16 17 18 19 20 21">
    <location>
        <begin position="777"/>
        <end position="802"/>
    </location>
</feature>
<feature type="topological domain" description="Cytoplasmic" evidence="8 9 16 17 18 19 20 21">
    <location>
        <begin position="803"/>
        <end position="823"/>
    </location>
</feature>
<feature type="transmembrane region" description="Helical; Name=6" evidence="8 9 16 17 18 19 20 21">
    <location>
        <begin position="824"/>
        <end position="845"/>
    </location>
</feature>
<feature type="topological domain" description="Extracellular" evidence="8 9 16 17 18 19 20 21">
    <location>
        <begin position="846"/>
        <end position="850"/>
    </location>
</feature>
<feature type="transmembrane region" description="Helical; Name=7" evidence="8 9 16 17 18 19 20 21">
    <location>
        <begin position="851"/>
        <end position="872"/>
    </location>
</feature>
<feature type="topological domain" description="Cytoplasmic" evidence="8 9 16 17 18 19 20 21">
    <location>
        <begin position="873"/>
        <end position="1009"/>
    </location>
</feature>
<feature type="domain" description="GAIN-B" evidence="3">
    <location>
        <begin position="453"/>
        <end position="611"/>
    </location>
</feature>
<feature type="region of interest" description="Disordered" evidence="4">
    <location>
        <begin position="279"/>
        <end position="305"/>
    </location>
</feature>
<feature type="region of interest" description="Disordered" evidence="4">
    <location>
        <begin position="325"/>
        <end position="346"/>
    </location>
</feature>
<feature type="region of interest" description="GPS" evidence="3">
    <location>
        <begin position="562"/>
        <end position="611"/>
    </location>
</feature>
<feature type="region of interest" description="Stachel" evidence="8">
    <location>
        <begin position="600"/>
        <end position="611"/>
    </location>
</feature>
<feature type="compositionally biased region" description="Polar residues" evidence="4">
    <location>
        <begin position="280"/>
        <end position="293"/>
    </location>
</feature>
<feature type="binding site" evidence="9">
    <location>
        <position position="860"/>
    </location>
    <ligand>
        <name>3beta-hydroxyandrost-5-en-17-one</name>
        <dbReference type="ChEBI" id="CHEBI:28689"/>
    </ligand>
</feature>
<feature type="site" description="Cleavage; by autolysis" evidence="3">
    <location>
        <begin position="598"/>
        <end position="599"/>
    </location>
</feature>
<feature type="modified residue" description="Phosphoserine" evidence="22">
    <location>
        <position position="1002"/>
    </location>
</feature>
<feature type="glycosylation site" description="N-linked (GlcNAc...) asparagine" evidence="2">
    <location>
        <position position="43"/>
    </location>
</feature>
<feature type="glycosylation site" description="N-linked (GlcNAc...) asparagine" evidence="2">
    <location>
        <position position="77"/>
    </location>
</feature>
<feature type="glycosylation site" description="N-linked (GlcNAc...) asparagine" evidence="2">
    <location>
        <position position="91"/>
    </location>
</feature>
<feature type="glycosylation site" description="N-linked (GlcNAc...) asparagine" evidence="2">
    <location>
        <position position="103"/>
    </location>
</feature>
<feature type="glycosylation site" description="N-linked (GlcNAc...) asparagine" evidence="2">
    <location>
        <position position="109"/>
    </location>
</feature>
<feature type="glycosylation site" description="N-linked (GlcNAc...) asparagine" evidence="2">
    <location>
        <position position="127"/>
    </location>
</feature>
<feature type="glycosylation site" description="N-linked (GlcNAc...) asparagine" evidence="2">
    <location>
        <position position="136"/>
    </location>
</feature>
<feature type="glycosylation site" description="N-linked (GlcNAc...) asparagine" evidence="2">
    <location>
        <position position="154"/>
    </location>
</feature>
<feature type="glycosylation site" description="N-linked (GlcNAc...) asparagine" evidence="2">
    <location>
        <position position="178"/>
    </location>
</feature>
<feature type="glycosylation site" description="N-linked (GlcNAc...) asparagine" evidence="2">
    <location>
        <position position="186"/>
    </location>
</feature>
<feature type="glycosylation site" description="N-linked (GlcNAc...) asparagine" evidence="2">
    <location>
        <position position="362"/>
    </location>
</feature>
<feature type="glycosylation site" description="N-linked (GlcNAc...) asparagine" evidence="2">
    <location>
        <position position="427"/>
    </location>
</feature>
<feature type="glycosylation site" description="N-linked (GlcNAc...) asparagine" evidence="2">
    <location>
        <position position="448"/>
    </location>
</feature>
<feature type="glycosylation site" description="N-linked (GlcNAc...) asparagine" evidence="2">
    <location>
        <position position="453"/>
    </location>
</feature>
<feature type="glycosylation site" description="N-linked (GlcNAc...) asparagine" evidence="2">
    <location>
        <position position="520"/>
    </location>
</feature>
<feature type="glycosylation site" description="N-linked (GlcNAc...) asparagine" evidence="2">
    <location>
        <position position="534"/>
    </location>
</feature>
<feature type="glycosylation site" description="N-linked (GlcNAc...) asparagine" evidence="2">
    <location>
        <position position="539"/>
    </location>
</feature>
<feature type="glycosylation site" description="N-linked (GlcNAc...) asparagine" evidence="2">
    <location>
        <position position="543"/>
    </location>
</feature>
<feature type="glycosylation site" description="N-linked (GlcNAc...) asparagine" evidence="2">
    <location>
        <position position="589"/>
    </location>
</feature>
<feature type="glycosylation site" description="N-linked (GlcNAc...) asparagine" evidence="2">
    <location>
        <position position="849"/>
    </location>
</feature>
<feature type="disulfide bond" evidence="3">
    <location>
        <begin position="562"/>
        <end position="593"/>
    </location>
</feature>
<feature type="disulfide bond" evidence="3">
    <location>
        <begin position="581"/>
        <end position="595"/>
    </location>
</feature>
<feature type="disulfide bond" evidence="8 9 16 17 18 19 20 21">
    <location>
        <begin position="686"/>
        <end position="770"/>
    </location>
</feature>
<feature type="splice variant" id="VSP_009806" description="In isoform 5." evidence="10">
    <location>
        <begin position="40"/>
        <end position="66"/>
    </location>
</feature>
<feature type="splice variant" id="VSP_009807" description="In isoform 4." evidence="10">
    <location>
        <begin position="51"/>
        <end position="66"/>
    </location>
</feature>
<feature type="splice variant" id="VSP_009808" description="In isoform 2." evidence="10">
    <location>
        <begin position="64"/>
        <end position="66"/>
    </location>
</feature>
<feature type="splice variant" id="VSP_009809" description="In isoform 3." evidence="11">
    <location>
        <begin position="80"/>
        <end position="93"/>
    </location>
</feature>
<feature type="mutagenesis site" description="Impaired G protein-coupled receptor activity." evidence="8">
    <original>VTV</original>
    <variation>ATA</variation>
    <location>
        <begin position="544"/>
        <end position="546"/>
    </location>
</feature>
<feature type="mutagenesis site" description="Impaired G protein-coupled receptor activity." evidence="8">
    <original>F</original>
    <variation>A</variation>
    <location>
        <position position="564"/>
    </location>
</feature>
<feature type="mutagenesis site" description="Impaired G protein-coupled receptor activity." evidence="8">
    <original>W</original>
    <variation>A</variation>
    <location>
        <position position="576"/>
    </location>
</feature>
<feature type="mutagenesis site" description="Increased G protein-coupled receptor activity." evidence="8">
    <original>T</original>
    <variation>V</variation>
    <variation>I</variation>
    <location>
        <position position="599"/>
    </location>
</feature>
<feature type="mutagenesis site" description="Impaired G protein-coupled receptor activity." evidence="8">
    <original>F</original>
    <variation>A</variation>
    <location>
        <position position="601"/>
    </location>
</feature>
<feature type="mutagenesis site" description="Impaired G protein-coupled receptor activity." evidence="8">
    <original>L</original>
    <variation>A</variation>
    <location>
        <position position="605"/>
    </location>
</feature>
<feature type="mutagenesis site" description="Impaired structural change induced by deoxycorticosterone." evidence="9">
    <original>P</original>
    <variation>A</variation>
    <location>
        <position position="614"/>
    </location>
</feature>
<feature type="mutagenesis site" description="Impaired structural change induced by deoxycorticosterone." evidence="9">
    <original>M</original>
    <variation>A</variation>
    <location>
        <position position="617"/>
    </location>
</feature>
<feature type="mutagenesis site" description="Strongly decreased G protein-coupled receptor activity in response to dehydroepiandrosterone. Impaired structural change induced by deoxycorticosterone." evidence="9">
    <original>T</original>
    <variation>A</variation>
    <location>
        <position position="624"/>
    </location>
</feature>
<feature type="mutagenesis site" description="Impaired structural change induced by deoxycorticosterone." evidence="9">
    <original>L</original>
    <variation>A</variation>
    <location>
        <position position="667"/>
    </location>
</feature>
<feature type="mutagenesis site" description="Strongly decreased G protein-coupled receptor activity in response to dehydroepiandrosterone." evidence="9">
    <original>F</original>
    <variation>A</variation>
    <location>
        <position position="671"/>
    </location>
</feature>
<feature type="mutagenesis site" description="Strongly decreased G protein-coupled receptor activity in response to dehydroepiandrosterone." evidence="9">
    <original>N</original>
    <variation>A</variation>
    <location>
        <position position="763"/>
    </location>
</feature>
<feature type="mutagenesis site" description="Strongly decreased G protein-coupled receptor activity in response to dehydroepiandrosterone." evidence="9">
    <original>T</original>
    <variation>A</variation>
    <location>
        <position position="765"/>
    </location>
</feature>
<feature type="mutagenesis site" description="Impaired structural change induced by deoxycorticosterone." evidence="9">
    <original>F</original>
    <variation>A</variation>
    <location>
        <position position="769"/>
    </location>
</feature>
<feature type="mutagenesis site" description="Impaired G protein-coupled receptor activity." evidence="8">
    <original>W</original>
    <variation>A</variation>
    <location>
        <position position="771"/>
    </location>
</feature>
<feature type="mutagenesis site" description="Strongly decreased G protein-coupled receptor activity in response to dehydroepiandrosterone." evidence="8 9">
    <original>W</original>
    <variation>A</variation>
    <location>
        <position position="838"/>
    </location>
</feature>
<feature type="mutagenesis site" description="Impaired structural change induced by deoxycorticosterone." evidence="9">
    <original>F</original>
    <variation>A</variation>
    <location>
        <position position="842"/>
    </location>
</feature>
<feature type="mutagenesis site" description="Strongly decreased G protein-coupled receptor activity in response to dehydroepiandrosterone. Impaired structural change induced by deoxycorticosterone." evidence="9">
    <original>M</original>
    <variation>A</variation>
    <location>
        <position position="853"/>
    </location>
</feature>
<feature type="sequence conflict" description="In Ref. 2; BAC32902." evidence="14" ref="2">
    <original>T</original>
    <variation>K</variation>
    <location>
        <position position="781"/>
    </location>
</feature>
<feature type="helix" evidence="24">
    <location>
        <begin position="601"/>
        <end position="604"/>
    </location>
</feature>
<feature type="helix" evidence="25">
    <location>
        <begin position="617"/>
        <end position="644"/>
    </location>
</feature>
<feature type="helix" evidence="25">
    <location>
        <begin position="646"/>
        <end position="648"/>
    </location>
</feature>
<feature type="helix" evidence="25">
    <location>
        <begin position="652"/>
        <end position="676"/>
    </location>
</feature>
<feature type="helix" evidence="25">
    <location>
        <begin position="683"/>
        <end position="715"/>
    </location>
</feature>
<feature type="helix" evidence="25">
    <location>
        <begin position="726"/>
        <end position="748"/>
    </location>
</feature>
<feature type="helix" evidence="25">
    <location>
        <begin position="750"/>
        <end position="752"/>
    </location>
</feature>
<feature type="strand" evidence="25">
    <location>
        <begin position="766"/>
        <end position="768"/>
    </location>
</feature>
<feature type="strand" evidence="25">
    <location>
        <begin position="774"/>
        <end position="776"/>
    </location>
</feature>
<feature type="helix" evidence="25">
    <location>
        <begin position="777"/>
        <end position="782"/>
    </location>
</feature>
<feature type="helix" evidence="25">
    <location>
        <begin position="784"/>
        <end position="808"/>
    </location>
</feature>
<feature type="strand" evidence="25">
    <location>
        <begin position="812"/>
        <end position="815"/>
    </location>
</feature>
<feature type="helix" evidence="25">
    <location>
        <begin position="821"/>
        <end position="833"/>
    </location>
</feature>
<feature type="helix" evidence="25">
    <location>
        <begin position="836"/>
        <end position="839"/>
    </location>
</feature>
<feature type="helix" evidence="25">
    <location>
        <begin position="840"/>
        <end position="844"/>
    </location>
</feature>
<feature type="turn" evidence="26">
    <location>
        <begin position="845"/>
        <end position="847"/>
    </location>
</feature>
<feature type="helix" evidence="25">
    <location>
        <begin position="850"/>
        <end position="861"/>
    </location>
</feature>
<feature type="helix" evidence="25">
    <location>
        <begin position="863"/>
        <end position="871"/>
    </location>
</feature>
<feature type="strand" evidence="23">
    <location>
        <begin position="873"/>
        <end position="875"/>
    </location>
</feature>
<feature type="helix" evidence="25">
    <location>
        <begin position="876"/>
        <end position="882"/>
    </location>
</feature>
<dbReference type="EMBL" id="AF538952">
    <property type="protein sequence ID" value="AAN33054.1"/>
    <property type="molecule type" value="mRNA"/>
</dbReference>
<dbReference type="EMBL" id="AF538955">
    <property type="protein sequence ID" value="AAN33057.1"/>
    <property type="molecule type" value="mRNA"/>
</dbReference>
<dbReference type="EMBL" id="AF538956">
    <property type="protein sequence ID" value="AAN33058.1"/>
    <property type="molecule type" value="mRNA"/>
</dbReference>
<dbReference type="EMBL" id="AF538957">
    <property type="protein sequence ID" value="AAN33059.1"/>
    <property type="molecule type" value="mRNA"/>
</dbReference>
<dbReference type="EMBL" id="AK046871">
    <property type="protein sequence ID" value="BAC32902.1"/>
    <property type="molecule type" value="mRNA"/>
</dbReference>
<dbReference type="EMBL" id="AL731801">
    <property type="status" value="NOT_ANNOTATED_CDS"/>
    <property type="molecule type" value="Genomic_DNA"/>
</dbReference>
<dbReference type="CCDS" id="CCDS41196.1">
    <molecule id="Q8CJ12-1"/>
</dbReference>
<dbReference type="CCDS" id="CCDS41197.1">
    <molecule id="Q8CJ12-3"/>
</dbReference>
<dbReference type="CCDS" id="CCDS41199.1">
    <molecule id="Q8CJ12-5"/>
</dbReference>
<dbReference type="CCDS" id="CCDS72459.1">
    <molecule id="Q8CJ12-2"/>
</dbReference>
<dbReference type="CCDS" id="CCDS81192.1">
    <molecule id="Q8CJ12-4"/>
</dbReference>
<dbReference type="RefSeq" id="NP_001073317.1">
    <molecule id="Q8CJ12-5"/>
    <property type="nucleotide sequence ID" value="NM_001079848.2"/>
</dbReference>
<dbReference type="RefSeq" id="NP_001073326.1">
    <molecule id="Q8CJ12-3"/>
    <property type="nucleotide sequence ID" value="NM_001079857.2"/>
</dbReference>
<dbReference type="RefSeq" id="NP_001277374.1">
    <molecule id="Q8CJ12-4"/>
    <property type="nucleotide sequence ID" value="NM_001290445.1"/>
</dbReference>
<dbReference type="RefSeq" id="NP_001277375.1">
    <molecule id="Q8CJ12-2"/>
    <property type="nucleotide sequence ID" value="NM_001290446.1"/>
</dbReference>
<dbReference type="RefSeq" id="NP_848827.1">
    <molecule id="Q8CJ12-1"/>
    <property type="nucleotide sequence ID" value="NM_178712.4"/>
</dbReference>
<dbReference type="RefSeq" id="XP_036017827.1">
    <molecule id="Q8CJ12-1"/>
    <property type="nucleotide sequence ID" value="XM_036161934.1"/>
</dbReference>
<dbReference type="RefSeq" id="XP_036017828.1">
    <molecule id="Q8CJ12-2"/>
    <property type="nucleotide sequence ID" value="XM_036161935.1"/>
</dbReference>
<dbReference type="RefSeq" id="XP_036017830.1">
    <molecule id="Q8CJ12-3"/>
    <property type="nucleotide sequence ID" value="XM_036161937.1"/>
</dbReference>
<dbReference type="RefSeq" id="XP_036017834.1">
    <molecule id="Q8CJ12-5"/>
    <property type="nucleotide sequence ID" value="XM_036161941.1"/>
</dbReference>
<dbReference type="PDB" id="7WUI">
    <property type="method" value="EM"/>
    <property type="resolution" value="3.10 A"/>
    <property type="chains" value="R=38-891"/>
</dbReference>
<dbReference type="PDB" id="7WUQ">
    <property type="method" value="EM"/>
    <property type="resolution" value="2.90 A"/>
    <property type="chains" value="R=597-1009"/>
</dbReference>
<dbReference type="PDB" id="7XKD">
    <property type="method" value="EM"/>
    <property type="resolution" value="2.40 A"/>
    <property type="chains" value="R=614-891"/>
</dbReference>
<dbReference type="PDB" id="7XKE">
    <property type="method" value="EM"/>
    <property type="resolution" value="2.90 A"/>
    <property type="chains" value="R=38-891"/>
</dbReference>
<dbReference type="PDB" id="7XKF">
    <property type="method" value="EM"/>
    <property type="resolution" value="2.40 A"/>
    <property type="chains" value="R=614-891"/>
</dbReference>
<dbReference type="PDB" id="7YP7">
    <property type="method" value="EM"/>
    <property type="resolution" value="3.10 A"/>
    <property type="chains" value="R=38-891"/>
</dbReference>
<dbReference type="PDBsum" id="7WUI"/>
<dbReference type="PDBsum" id="7WUQ"/>
<dbReference type="PDBsum" id="7XKD"/>
<dbReference type="PDBsum" id="7XKE"/>
<dbReference type="PDBsum" id="7XKF"/>
<dbReference type="PDBsum" id="7YP7"/>
<dbReference type="EMDB" id="EMD-32836"/>
<dbReference type="EMDB" id="EMD-32838"/>
<dbReference type="EMDB" id="EMD-33248"/>
<dbReference type="EMDB" id="EMD-33249"/>
<dbReference type="EMDB" id="EMD-33250"/>
<dbReference type="EMDB" id="EMD-33995"/>
<dbReference type="SMR" id="Q8CJ12"/>
<dbReference type="FunCoup" id="Q8CJ12">
    <property type="interactions" value="300"/>
</dbReference>
<dbReference type="STRING" id="10090.ENSMUSP00000108019"/>
<dbReference type="MEROPS" id="P02.007"/>
<dbReference type="GlyCosmos" id="Q8CJ12">
    <property type="glycosylation" value="20 sites, No reported glycans"/>
</dbReference>
<dbReference type="GlyGen" id="Q8CJ12">
    <property type="glycosylation" value="22 sites, 3 N-linked glycans (3 sites)"/>
</dbReference>
<dbReference type="iPTMnet" id="Q8CJ12"/>
<dbReference type="PhosphoSitePlus" id="Q8CJ12"/>
<dbReference type="PaxDb" id="10090-ENSMUSP00000108019"/>
<dbReference type="ProteomicsDB" id="296133">
    <molecule id="Q8CJ12-1"/>
</dbReference>
<dbReference type="ProteomicsDB" id="296134">
    <molecule id="Q8CJ12-2"/>
</dbReference>
<dbReference type="ProteomicsDB" id="296135">
    <molecule id="Q8CJ12-3"/>
</dbReference>
<dbReference type="ProteomicsDB" id="296136">
    <molecule id="Q8CJ12-4"/>
</dbReference>
<dbReference type="ProteomicsDB" id="296137">
    <molecule id="Q8CJ12-5"/>
</dbReference>
<dbReference type="Antibodypedia" id="473">
    <property type="antibodies" value="138 antibodies from 26 providers"/>
</dbReference>
<dbReference type="DNASU" id="237175"/>
<dbReference type="Ensembl" id="ENSMUST00000112400.8">
    <molecule id="Q8CJ12-1"/>
    <property type="protein sequence ID" value="ENSMUSP00000108019.2"/>
    <property type="gene ID" value="ENSMUSG00000031298.16"/>
</dbReference>
<dbReference type="Ensembl" id="ENSMUST00000112402.8">
    <molecule id="Q8CJ12-3"/>
    <property type="protein sequence ID" value="ENSMUSP00000108021.2"/>
    <property type="gene ID" value="ENSMUSG00000031298.16"/>
</dbReference>
<dbReference type="Ensembl" id="ENSMUST00000112404.9">
    <molecule id="Q8CJ12-5"/>
    <property type="protein sequence ID" value="ENSMUSP00000108023.3"/>
    <property type="gene ID" value="ENSMUSG00000031298.16"/>
</dbReference>
<dbReference type="Ensembl" id="ENSMUST00000112405.9">
    <molecule id="Q8CJ12-4"/>
    <property type="protein sequence ID" value="ENSMUSP00000108024.3"/>
    <property type="gene ID" value="ENSMUSG00000031298.16"/>
</dbReference>
<dbReference type="Ensembl" id="ENSMUST00000112408.9">
    <molecule id="Q8CJ12-2"/>
    <property type="protein sequence ID" value="ENSMUSP00000108027.3"/>
    <property type="gene ID" value="ENSMUSG00000031298.16"/>
</dbReference>
<dbReference type="GeneID" id="237175"/>
<dbReference type="KEGG" id="mmu:237175"/>
<dbReference type="UCSC" id="uc009utd.2">
    <molecule id="Q8CJ12-1"/>
    <property type="organism name" value="mouse"/>
</dbReference>
<dbReference type="UCSC" id="uc009ute.2">
    <molecule id="Q8CJ12-3"/>
    <property type="organism name" value="mouse"/>
</dbReference>
<dbReference type="UCSC" id="uc009utg.2">
    <molecule id="Q8CJ12-5"/>
    <property type="organism name" value="mouse"/>
</dbReference>
<dbReference type="UCSC" id="uc009uth.2">
    <molecule id="Q8CJ12-2"/>
    <property type="organism name" value="mouse"/>
</dbReference>
<dbReference type="UCSC" id="uc009uti.2">
    <molecule id="Q8CJ12-4"/>
    <property type="organism name" value="mouse"/>
</dbReference>
<dbReference type="AGR" id="MGI:2446854"/>
<dbReference type="CTD" id="10149"/>
<dbReference type="MGI" id="MGI:2446854">
    <property type="gene designation" value="Adgrg2"/>
</dbReference>
<dbReference type="VEuPathDB" id="HostDB:ENSMUSG00000031298"/>
<dbReference type="eggNOG" id="KOG4193">
    <property type="taxonomic scope" value="Eukaryota"/>
</dbReference>
<dbReference type="GeneTree" id="ENSGT00940000156341"/>
<dbReference type="HOGENOM" id="CLU_002753_3_3_1"/>
<dbReference type="InParanoid" id="Q8CJ12"/>
<dbReference type="OMA" id="RIWLFGN"/>
<dbReference type="OrthoDB" id="10037534at2759"/>
<dbReference type="PhylomeDB" id="Q8CJ12"/>
<dbReference type="TreeFam" id="TF321769"/>
<dbReference type="BioGRID-ORCS" id="237175">
    <property type="hits" value="1 hit in 76 CRISPR screens"/>
</dbReference>
<dbReference type="ChiTaRS" id="Adgrg2">
    <property type="organism name" value="mouse"/>
</dbReference>
<dbReference type="PRO" id="PR:Q8CJ12"/>
<dbReference type="Proteomes" id="UP000000589">
    <property type="component" value="Chromosome X"/>
</dbReference>
<dbReference type="RNAct" id="Q8CJ12">
    <property type="molecule type" value="protein"/>
</dbReference>
<dbReference type="Bgee" id="ENSMUSG00000031298">
    <property type="expression patterns" value="Expressed in efferent duct and 121 other cell types or tissues"/>
</dbReference>
<dbReference type="ExpressionAtlas" id="Q8CJ12">
    <property type="expression patterns" value="baseline and differential"/>
</dbReference>
<dbReference type="GO" id="GO:0016324">
    <property type="term" value="C:apical plasma membrane"/>
    <property type="evidence" value="ECO:0000315"/>
    <property type="project" value="UniProtKB"/>
</dbReference>
<dbReference type="GO" id="GO:0005829">
    <property type="term" value="C:cytosol"/>
    <property type="evidence" value="ECO:0007669"/>
    <property type="project" value="Ensembl"/>
</dbReference>
<dbReference type="GO" id="GO:0004930">
    <property type="term" value="F:G protein-coupled receptor activity"/>
    <property type="evidence" value="ECO:0000314"/>
    <property type="project" value="UniProtKB"/>
</dbReference>
<dbReference type="GO" id="GO:0007189">
    <property type="term" value="P:adenylate cyclase-activating G protein-coupled receptor signaling pathway"/>
    <property type="evidence" value="ECO:0000314"/>
    <property type="project" value="UniProtKB"/>
</dbReference>
<dbReference type="GO" id="GO:0007166">
    <property type="term" value="P:cell surface receptor signaling pathway"/>
    <property type="evidence" value="ECO:0007669"/>
    <property type="project" value="InterPro"/>
</dbReference>
<dbReference type="GO" id="GO:0007286">
    <property type="term" value="P:spermatid development"/>
    <property type="evidence" value="ECO:0000315"/>
    <property type="project" value="UniProtKB"/>
</dbReference>
<dbReference type="CDD" id="cd15444">
    <property type="entry name" value="7tmB2_GPR64"/>
    <property type="match status" value="1"/>
</dbReference>
<dbReference type="FunFam" id="1.20.1070.10:FF:000043">
    <property type="entry name" value="adhesion G-protein coupled receptor G2 isoform X1"/>
    <property type="match status" value="1"/>
</dbReference>
<dbReference type="FunFam" id="2.60.220.50:FF:000003">
    <property type="entry name" value="adhesion G-protein coupled receptor G2 isoform X2"/>
    <property type="match status" value="1"/>
</dbReference>
<dbReference type="Gene3D" id="2.60.220.50">
    <property type="match status" value="1"/>
</dbReference>
<dbReference type="Gene3D" id="1.20.1070.10">
    <property type="entry name" value="Rhodopsin 7-helix transmembrane proteins"/>
    <property type="match status" value="1"/>
</dbReference>
<dbReference type="InterPro" id="IPR057244">
    <property type="entry name" value="GAIN_B"/>
</dbReference>
<dbReference type="InterPro" id="IPR046338">
    <property type="entry name" value="GAIN_dom_sf"/>
</dbReference>
<dbReference type="InterPro" id="IPR017981">
    <property type="entry name" value="GPCR_2-like_7TM"/>
</dbReference>
<dbReference type="InterPro" id="IPR000832">
    <property type="entry name" value="GPCR_2_secretin-like"/>
</dbReference>
<dbReference type="InterPro" id="IPR017983">
    <property type="entry name" value="GPCR_2_secretin-like_CS"/>
</dbReference>
<dbReference type="InterPro" id="IPR000203">
    <property type="entry name" value="GPS"/>
</dbReference>
<dbReference type="PANTHER" id="PTHR12011">
    <property type="entry name" value="ADHESION G-PROTEIN COUPLED RECEPTOR"/>
    <property type="match status" value="1"/>
</dbReference>
<dbReference type="PANTHER" id="PTHR12011:SF264">
    <property type="entry name" value="ADHESION G-PROTEIN COUPLED RECEPTOR G2"/>
    <property type="match status" value="1"/>
</dbReference>
<dbReference type="Pfam" id="PF00002">
    <property type="entry name" value="7tm_2"/>
    <property type="match status" value="1"/>
</dbReference>
<dbReference type="Pfam" id="PF01825">
    <property type="entry name" value="GPS"/>
    <property type="match status" value="1"/>
</dbReference>
<dbReference type="PRINTS" id="PR00249">
    <property type="entry name" value="GPCRSECRETIN"/>
</dbReference>
<dbReference type="SMART" id="SM00303">
    <property type="entry name" value="GPS"/>
    <property type="match status" value="1"/>
</dbReference>
<dbReference type="SUPFAM" id="SSF81321">
    <property type="entry name" value="Family A G protein-coupled receptor-like"/>
    <property type="match status" value="1"/>
</dbReference>
<dbReference type="PROSITE" id="PS00650">
    <property type="entry name" value="G_PROTEIN_RECEP_F2_2"/>
    <property type="match status" value="1"/>
</dbReference>
<dbReference type="PROSITE" id="PS50261">
    <property type="entry name" value="G_PROTEIN_RECEP_F2_4"/>
    <property type="match status" value="1"/>
</dbReference>
<dbReference type="PROSITE" id="PS50221">
    <property type="entry name" value="GAIN_B"/>
    <property type="match status" value="1"/>
</dbReference>
<keyword id="KW-0002">3D-structure</keyword>
<keyword id="KW-0025">Alternative splicing</keyword>
<keyword id="KW-1003">Cell membrane</keyword>
<keyword id="KW-1015">Disulfide bond</keyword>
<keyword id="KW-0297">G-protein coupled receptor</keyword>
<keyword id="KW-0325">Glycoprotein</keyword>
<keyword id="KW-0472">Membrane</keyword>
<keyword id="KW-0597">Phosphoprotein</keyword>
<keyword id="KW-0675">Receptor</keyword>
<keyword id="KW-1185">Reference proteome</keyword>
<keyword id="KW-0732">Signal</keyword>
<keyword id="KW-0807">Transducer</keyword>
<keyword id="KW-0812">Transmembrane</keyword>
<keyword id="KW-1133">Transmembrane helix</keyword>
<name>AGRG2_MOUSE</name>
<evidence type="ECO:0000250" key="1">
    <source>
        <dbReference type="UniProtKB" id="Q8IZP9"/>
    </source>
</evidence>
<evidence type="ECO:0000255" key="2"/>
<evidence type="ECO:0000255" key="3">
    <source>
        <dbReference type="PROSITE-ProRule" id="PRU00098"/>
    </source>
</evidence>
<evidence type="ECO:0000256" key="4">
    <source>
        <dbReference type="SAM" id="MobiDB-lite"/>
    </source>
</evidence>
<evidence type="ECO:0000269" key="5">
    <source>
    </source>
</evidence>
<evidence type="ECO:0000269" key="6">
    <source>
    </source>
</evidence>
<evidence type="ECO:0000269" key="7">
    <source>
    </source>
</evidence>
<evidence type="ECO:0000269" key="8">
    <source>
    </source>
</evidence>
<evidence type="ECO:0000269" key="9">
    <source>
    </source>
</evidence>
<evidence type="ECO:0000303" key="10">
    <source>
    </source>
</evidence>
<evidence type="ECO:0000303" key="11">
    <source>
    </source>
</evidence>
<evidence type="ECO:0000303" key="12">
    <source>
    </source>
</evidence>
<evidence type="ECO:0000303" key="13">
    <source>
    </source>
</evidence>
<evidence type="ECO:0000305" key="14"/>
<evidence type="ECO:0000312" key="15">
    <source>
        <dbReference type="MGI" id="MGI:2446854"/>
    </source>
</evidence>
<evidence type="ECO:0007744" key="16">
    <source>
        <dbReference type="PDB" id="7WUI"/>
    </source>
</evidence>
<evidence type="ECO:0007744" key="17">
    <source>
        <dbReference type="PDB" id="7WUQ"/>
    </source>
</evidence>
<evidence type="ECO:0007744" key="18">
    <source>
        <dbReference type="PDB" id="7XKD"/>
    </source>
</evidence>
<evidence type="ECO:0007744" key="19">
    <source>
        <dbReference type="PDB" id="7XKE"/>
    </source>
</evidence>
<evidence type="ECO:0007744" key="20">
    <source>
        <dbReference type="PDB" id="7XKF"/>
    </source>
</evidence>
<evidence type="ECO:0007744" key="21">
    <source>
        <dbReference type="PDB" id="7YP7"/>
    </source>
</evidence>
<evidence type="ECO:0007744" key="22">
    <source>
    </source>
</evidence>
<evidence type="ECO:0007829" key="23">
    <source>
        <dbReference type="PDB" id="7WUI"/>
    </source>
</evidence>
<evidence type="ECO:0007829" key="24">
    <source>
        <dbReference type="PDB" id="7WUQ"/>
    </source>
</evidence>
<evidence type="ECO:0007829" key="25">
    <source>
        <dbReference type="PDB" id="7XKD"/>
    </source>
</evidence>
<evidence type="ECO:0007829" key="26">
    <source>
        <dbReference type="PDB" id="7YP7"/>
    </source>
</evidence>
<comment type="function">
    <text evidence="6 9">Adhesion G-protein coupled receptor (aGPCR) for steroid hormones, such as dehydroepiandrosterone (DHEA; also named 3beta-hydroxyandrost-5-en-17-one) and androstenedione (PubMed:35982227). Involved in a signal transduction pathway controlling epididymal function and male fertility (PubMed:15367682). Ligand binding causes a conformation change that triggers signaling via guanine nucleotide-binding proteins (G proteins) and modulates the activity of downstream effectors, such as adenylate cyclase (PubMed:35982227). ADGRG2 is coupled to G(s) G proteins and mediates activation of adenylate cyclase activity (PubMed:35982227). Also able to couple with G(q) G proteins in vitro (PubMed:35982227). May regulate fluid exchange within epididymis (PubMed:15367682).</text>
</comment>
<comment type="activity regulation">
    <text evidence="3 8 9">Forms a heterodimer of 2 chains generated by proteolytic processing that remain associated through non-covalent interactions mediated by the GAIN-B domain (By similarity). In the inactivated receptor, the Stachel sequence (also named stalk) is embedded in the GAIN-B domain, where it adopts a beta-strand conformation (PubMed:35418677). On activation, the Stachel moves into the 7 transmembrane region and adopts a twisted hook-shaped configuration that forms contacts within the receptor, leading to coupling of a G-alpha protein, which activates signaling (PubMed:35418677). The cleaved GAIN-B and N-terminal domains can then dissociate from the rest of the receptor (PubMed:35418677). Deoxycorticosterone (DOC) acts as an antagonist of ADGRG2 (PubMed:35982227).</text>
</comment>
<comment type="subunit">
    <text evidence="1 3">Heterodimer of 2 chains generated by proteolytic processing; the large extracellular N-terminal fragment and the membrane-bound C-terminal fragment predominantly remain associated and non-covalently linked (By similarity). Interacts with CFTR (By similarity).</text>
</comment>
<comment type="subcellular location">
    <subcellularLocation>
        <location evidence="5">Apical cell membrane</location>
        <topology evidence="8 9">Multi-pass membrane protein</topology>
    </subcellularLocation>
</comment>
<comment type="alternative products">
    <event type="alternative splicing"/>
    <isoform>
        <id>Q8CJ12-1</id>
        <name>1</name>
        <name>Long</name>
        <sequence type="displayed"/>
    </isoform>
    <isoform>
        <id>Q8CJ12-2</id>
        <name>2</name>
        <name>d2</name>
        <sequence type="described" ref="VSP_009808"/>
    </isoform>
    <isoform>
        <id>Q8CJ12-3</id>
        <name>3</name>
        <name>d1</name>
        <sequence type="described" ref="VSP_009809"/>
    </isoform>
    <isoform>
        <id>Q8CJ12-4</id>
        <name>4</name>
        <name>d3</name>
        <sequence type="described" ref="VSP_009807"/>
    </isoform>
    <isoform>
        <id>Q8CJ12-5</id>
        <name>5</name>
        <sequence type="described" ref="VSP_009806"/>
    </isoform>
</comment>
<comment type="tissue specificity">
    <text evidence="5 7">Epididymis-specific expression (at protein level). Associated with apical membranes of efferent ductule and proximal epididymal duct epithelia. Mainly expressed in the nonciliated principal cells of the proximal excurrent ducts.</text>
</comment>
<comment type="domain">
    <text evidence="8">The Stachel sequence (also named stalk) in the C-terminal part of the extracellular domain (ECD) functions as a tethered agonist (PubMed:35418677). In the inactivated receptor, the Stachel sequence (also named stalk) is embedded in the GAIN-B domain, where it adopts a beta-strand conformation (PubMed:35418677). On activation, the Stachel moves into the 7 transmembrane region and adopts a twisted hook-shaped configuration that forms contacts within the receptor, leading to coupling of a G-alpha protein, which activates signaling (PubMed:35418677).</text>
</comment>
<comment type="PTM">
    <text evidence="3">Proteolytically cleaved into 2 subunits, an extracellular subunit and a seven-transmembrane subunit.</text>
</comment>
<comment type="PTM">
    <text evidence="5">Highly glycosylated.</text>
</comment>
<comment type="disruption phenotype">
    <text evidence="6">Mutant male are infertile. Targeted disruption leads to sperm stasis and duct obstruction, resulting from dysregulation of fluid reabsorption.</text>
</comment>
<comment type="similarity">
    <text evidence="14">Belongs to the G-protein coupled receptor 2 family. Adhesion G-protein coupled receptor (ADGR) subfamily.</text>
</comment>
<reference key="1">
    <citation type="journal article" date="2003" name="Mol. Reprod. Dev.">
        <title>HE6, a two-subunit heptahelical receptor associated with apical membranes of efferent and epididymal duct epithelia.</title>
        <authorList>
            <person name="Obermann H."/>
            <person name="Samalecos A."/>
            <person name="Osterhoff C."/>
            <person name="Schroeder B."/>
            <person name="Heller R."/>
            <person name="Kirchhoff C."/>
        </authorList>
    </citation>
    <scope>NUCLEOTIDE SEQUENCE [MRNA] (ISOFORMS 1; 2; 4 AND 5)</scope>
    <scope>TISSUE SPECIFICITY</scope>
    <scope>SUBUNIT</scope>
    <scope>GLYCOSYLATION</scope>
    <scope>SUBCELLULAR LOCATION</scope>
    <source>
        <strain>NMRI</strain>
        <tissue>Epididymis</tissue>
    </source>
</reference>
<reference key="2">
    <citation type="journal article" date="2005" name="Science">
        <title>The transcriptional landscape of the mammalian genome.</title>
        <authorList>
            <person name="Carninci P."/>
            <person name="Kasukawa T."/>
            <person name="Katayama S."/>
            <person name="Gough J."/>
            <person name="Frith M.C."/>
            <person name="Maeda N."/>
            <person name="Oyama R."/>
            <person name="Ravasi T."/>
            <person name="Lenhard B."/>
            <person name="Wells C."/>
            <person name="Kodzius R."/>
            <person name="Shimokawa K."/>
            <person name="Bajic V.B."/>
            <person name="Brenner S.E."/>
            <person name="Batalov S."/>
            <person name="Forrest A.R."/>
            <person name="Zavolan M."/>
            <person name="Davis M.J."/>
            <person name="Wilming L.G."/>
            <person name="Aidinis V."/>
            <person name="Allen J.E."/>
            <person name="Ambesi-Impiombato A."/>
            <person name="Apweiler R."/>
            <person name="Aturaliya R.N."/>
            <person name="Bailey T.L."/>
            <person name="Bansal M."/>
            <person name="Baxter L."/>
            <person name="Beisel K.W."/>
            <person name="Bersano T."/>
            <person name="Bono H."/>
            <person name="Chalk A.M."/>
            <person name="Chiu K.P."/>
            <person name="Choudhary V."/>
            <person name="Christoffels A."/>
            <person name="Clutterbuck D.R."/>
            <person name="Crowe M.L."/>
            <person name="Dalla E."/>
            <person name="Dalrymple B.P."/>
            <person name="de Bono B."/>
            <person name="Della Gatta G."/>
            <person name="di Bernardo D."/>
            <person name="Down T."/>
            <person name="Engstrom P."/>
            <person name="Fagiolini M."/>
            <person name="Faulkner G."/>
            <person name="Fletcher C.F."/>
            <person name="Fukushima T."/>
            <person name="Furuno M."/>
            <person name="Futaki S."/>
            <person name="Gariboldi M."/>
            <person name="Georgii-Hemming P."/>
            <person name="Gingeras T.R."/>
            <person name="Gojobori T."/>
            <person name="Green R.E."/>
            <person name="Gustincich S."/>
            <person name="Harbers M."/>
            <person name="Hayashi Y."/>
            <person name="Hensch T.K."/>
            <person name="Hirokawa N."/>
            <person name="Hill D."/>
            <person name="Huminiecki L."/>
            <person name="Iacono M."/>
            <person name="Ikeo K."/>
            <person name="Iwama A."/>
            <person name="Ishikawa T."/>
            <person name="Jakt M."/>
            <person name="Kanapin A."/>
            <person name="Katoh M."/>
            <person name="Kawasawa Y."/>
            <person name="Kelso J."/>
            <person name="Kitamura H."/>
            <person name="Kitano H."/>
            <person name="Kollias G."/>
            <person name="Krishnan S.P."/>
            <person name="Kruger A."/>
            <person name="Kummerfeld S.K."/>
            <person name="Kurochkin I.V."/>
            <person name="Lareau L.F."/>
            <person name="Lazarevic D."/>
            <person name="Lipovich L."/>
            <person name="Liu J."/>
            <person name="Liuni S."/>
            <person name="McWilliam S."/>
            <person name="Madan Babu M."/>
            <person name="Madera M."/>
            <person name="Marchionni L."/>
            <person name="Matsuda H."/>
            <person name="Matsuzawa S."/>
            <person name="Miki H."/>
            <person name="Mignone F."/>
            <person name="Miyake S."/>
            <person name="Morris K."/>
            <person name="Mottagui-Tabar S."/>
            <person name="Mulder N."/>
            <person name="Nakano N."/>
            <person name="Nakauchi H."/>
            <person name="Ng P."/>
            <person name="Nilsson R."/>
            <person name="Nishiguchi S."/>
            <person name="Nishikawa S."/>
            <person name="Nori F."/>
            <person name="Ohara O."/>
            <person name="Okazaki Y."/>
            <person name="Orlando V."/>
            <person name="Pang K.C."/>
            <person name="Pavan W.J."/>
            <person name="Pavesi G."/>
            <person name="Pesole G."/>
            <person name="Petrovsky N."/>
            <person name="Piazza S."/>
            <person name="Reed J."/>
            <person name="Reid J.F."/>
            <person name="Ring B.Z."/>
            <person name="Ringwald M."/>
            <person name="Rost B."/>
            <person name="Ruan Y."/>
            <person name="Salzberg S.L."/>
            <person name="Sandelin A."/>
            <person name="Schneider C."/>
            <person name="Schoenbach C."/>
            <person name="Sekiguchi K."/>
            <person name="Semple C.A."/>
            <person name="Seno S."/>
            <person name="Sessa L."/>
            <person name="Sheng Y."/>
            <person name="Shibata Y."/>
            <person name="Shimada H."/>
            <person name="Shimada K."/>
            <person name="Silva D."/>
            <person name="Sinclair B."/>
            <person name="Sperling S."/>
            <person name="Stupka E."/>
            <person name="Sugiura K."/>
            <person name="Sultana R."/>
            <person name="Takenaka Y."/>
            <person name="Taki K."/>
            <person name="Tammoja K."/>
            <person name="Tan S.L."/>
            <person name="Tang S."/>
            <person name="Taylor M.S."/>
            <person name="Tegner J."/>
            <person name="Teichmann S.A."/>
            <person name="Ueda H.R."/>
            <person name="van Nimwegen E."/>
            <person name="Verardo R."/>
            <person name="Wei C.L."/>
            <person name="Yagi K."/>
            <person name="Yamanishi H."/>
            <person name="Zabarovsky E."/>
            <person name="Zhu S."/>
            <person name="Zimmer A."/>
            <person name="Hide W."/>
            <person name="Bult C."/>
            <person name="Grimmond S.M."/>
            <person name="Teasdale R.D."/>
            <person name="Liu E.T."/>
            <person name="Brusic V."/>
            <person name="Quackenbush J."/>
            <person name="Wahlestedt C."/>
            <person name="Mattick J.S."/>
            <person name="Hume D.A."/>
            <person name="Kai C."/>
            <person name="Sasaki D."/>
            <person name="Tomaru Y."/>
            <person name="Fukuda S."/>
            <person name="Kanamori-Katayama M."/>
            <person name="Suzuki M."/>
            <person name="Aoki J."/>
            <person name="Arakawa T."/>
            <person name="Iida J."/>
            <person name="Imamura K."/>
            <person name="Itoh M."/>
            <person name="Kato T."/>
            <person name="Kawaji H."/>
            <person name="Kawagashira N."/>
            <person name="Kawashima T."/>
            <person name="Kojima M."/>
            <person name="Kondo S."/>
            <person name="Konno H."/>
            <person name="Nakano K."/>
            <person name="Ninomiya N."/>
            <person name="Nishio T."/>
            <person name="Okada M."/>
            <person name="Plessy C."/>
            <person name="Shibata K."/>
            <person name="Shiraki T."/>
            <person name="Suzuki S."/>
            <person name="Tagami M."/>
            <person name="Waki K."/>
            <person name="Watahiki A."/>
            <person name="Okamura-Oho Y."/>
            <person name="Suzuki H."/>
            <person name="Kawai J."/>
            <person name="Hayashizaki Y."/>
        </authorList>
    </citation>
    <scope>NUCLEOTIDE SEQUENCE [LARGE SCALE MRNA] (ISOFORM 3)</scope>
    <source>
        <strain>C57BL/6J</strain>
        <tissue>Medulla oblongata</tissue>
    </source>
</reference>
<reference key="3">
    <citation type="journal article" date="2009" name="PLoS Biol.">
        <title>Lineage-specific biology revealed by a finished genome assembly of the mouse.</title>
        <authorList>
            <person name="Church D.M."/>
            <person name="Goodstadt L."/>
            <person name="Hillier L.W."/>
            <person name="Zody M.C."/>
            <person name="Goldstein S."/>
            <person name="She X."/>
            <person name="Bult C.J."/>
            <person name="Agarwala R."/>
            <person name="Cherry J.L."/>
            <person name="DiCuccio M."/>
            <person name="Hlavina W."/>
            <person name="Kapustin Y."/>
            <person name="Meric P."/>
            <person name="Maglott D."/>
            <person name="Birtle Z."/>
            <person name="Marques A.C."/>
            <person name="Graves T."/>
            <person name="Zhou S."/>
            <person name="Teague B."/>
            <person name="Potamousis K."/>
            <person name="Churas C."/>
            <person name="Place M."/>
            <person name="Herschleb J."/>
            <person name="Runnheim R."/>
            <person name="Forrest D."/>
            <person name="Amos-Landgraf J."/>
            <person name="Schwartz D.C."/>
            <person name="Cheng Z."/>
            <person name="Lindblad-Toh K."/>
            <person name="Eichler E.E."/>
            <person name="Ponting C.P."/>
        </authorList>
    </citation>
    <scope>NUCLEOTIDE SEQUENCE [LARGE SCALE GENOMIC DNA]</scope>
    <source>
        <strain>C57BL/6J</strain>
    </source>
</reference>
<reference key="4">
    <citation type="journal article" date="2004" name="Mol. Cell. Biol.">
        <title>Targeted deletion of the epididymal receptor HE6 results in fluid dysregulation and male infertility.</title>
        <authorList>
            <person name="Davies B."/>
            <person name="Baumann C."/>
            <person name="Kirchhoff C."/>
            <person name="Ivell R."/>
            <person name="Nubbemeyer R."/>
            <person name="Habenicht U.F."/>
            <person name="Theuring F."/>
            <person name="Gottwald U."/>
        </authorList>
    </citation>
    <scope>DISRUPTION PHENOTYPE</scope>
    <scope>FUNCTION</scope>
</reference>
<reference key="5">
    <citation type="journal article" date="2008" name="Reproduction">
        <title>HE6/GPR64 adhesion receptor co-localizes with apical and subapical F-actin scaffold in male excurrent duct epithelia.</title>
        <authorList>
            <person name="Kirchhoff C."/>
            <person name="Osterhoff C."/>
            <person name="Samalecos A."/>
        </authorList>
    </citation>
    <scope>TISSUE SPECIFICITY</scope>
</reference>
<reference key="6">
    <citation type="journal article" date="2010" name="Cell">
        <title>A tissue-specific atlas of mouse protein phosphorylation and expression.</title>
        <authorList>
            <person name="Huttlin E.L."/>
            <person name="Jedrychowski M.P."/>
            <person name="Elias J.E."/>
            <person name="Goswami T."/>
            <person name="Rad R."/>
            <person name="Beausoleil S.A."/>
            <person name="Villen J."/>
            <person name="Haas W."/>
            <person name="Sowa M.E."/>
            <person name="Gygi S.P."/>
        </authorList>
    </citation>
    <scope>PHOSPHORYLATION [LARGE SCALE ANALYSIS] AT SER-1002</scope>
    <scope>IDENTIFICATION BY MASS SPECTROMETRY [LARGE SCALE ANALYSIS]</scope>
    <source>
        <tissue>Lung</tissue>
    </source>
</reference>
<reference evidence="16 17" key="7">
    <citation type="journal article" date="2022" name="Nature">
        <title>Tethered peptide activation mechanism of the adhesion GPCRs ADGRG2 and ADGRG4.</title>
        <authorList>
            <person name="Xiao P."/>
            <person name="Guo S."/>
            <person name="Wen X."/>
            <person name="He Q.T."/>
            <person name="Lin H."/>
            <person name="Huang S.M."/>
            <person name="Gou L."/>
            <person name="Zhang C."/>
            <person name="Yang Z."/>
            <person name="Zhong Y.N."/>
            <person name="Yang C.C."/>
            <person name="Li Y."/>
            <person name="Gong Z."/>
            <person name="Tao X.N."/>
            <person name="Yang Z.S."/>
            <person name="Lu Y."/>
            <person name="Li S.L."/>
            <person name="He J.Y."/>
            <person name="Wang C."/>
            <person name="Zhang L."/>
            <person name="Kong L."/>
            <person name="Sun J.P."/>
            <person name="Yu X."/>
        </authorList>
    </citation>
    <scope>STRUCTURE BY ELECTRON MICROSCOPY (2.90 ANGSTROMS) OF 597-1009 IN COMPLEX WITH GNAS; GNB1 AND GNG2</scope>
    <scope>ACTIVITY REGULATION</scope>
    <scope>DOMAIN</scope>
    <scope>DISULFIDE BOND</scope>
    <scope>MUTAGENESIS OF 544-VAL--VAL-546; PHE-564; TRP-576; THR-599; PHE-601; LEU-605; TRP-771 AND TRP-838</scope>
</reference>
<reference evidence="18 19 20" key="8">
    <citation type="journal article" date="2022" name="Nat. Chem. Biol.">
        <title>Structures of the ADGRG2-Gs complex in apo and ligand-bound forms.</title>
        <authorList>
            <person name="Lin H."/>
            <person name="Xiao P."/>
            <person name="Bu R.Q."/>
            <person name="Guo S."/>
            <person name="Yang Z."/>
            <person name="Yuan D."/>
            <person name="Zhu Z.L."/>
            <person name="Zhang C.X."/>
            <person name="He Q.T."/>
            <person name="Zhang C."/>
            <person name="Ping Y.Q."/>
            <person name="Zhao R.J."/>
            <person name="Ma C.S."/>
            <person name="Liu C.H."/>
            <person name="Zhang X.N."/>
            <person name="Jiang D."/>
            <person name="Huang S."/>
            <person name="Xi Y.T."/>
            <person name="Zhang D.L."/>
            <person name="Xue C.Y."/>
            <person name="Yang B.S."/>
            <person name="Li J.Y."/>
            <person name="Lin H.C."/>
            <person name="Zeng X.H."/>
            <person name="Zhao H."/>
            <person name="Xu W.M."/>
            <person name="Yi F."/>
            <person name="Liu Z."/>
            <person name="Sun J.P."/>
            <person name="Yu X."/>
        </authorList>
    </citation>
    <scope>STRUCTURE BY ELECTRON MICROSCOPY (2.40 ANGSTROMS) OF 614-891 IN COMPLEX WITH DEHYDROEPIANDROSTERONE; GNAS; GNB1 AND GNG2</scope>
    <scope>FUNCTION</scope>
    <scope>ACTIVITY REGULATION</scope>
    <scope>DISULFIDE BOND</scope>
    <scope>MUTAGENESIS OF PRO-614; MET-617; THR-624; LEU-667; PHE-671; ASN-763; THR-765; PHE-769; TRP-838; PHE-842 AND MET-853</scope>
</reference>
<accession>Q8CJ12</accession>
<accession>A2AHP8</accession>
<accession>A2AHP9</accession>
<accession>A2AHQ0</accession>
<accession>A2AHQ3</accession>
<accession>Q8BL10</accession>
<accession>Q8CJ08</accession>
<accession>Q8CJ09</accession>
<accession>Q8CJ10</accession>
<proteinExistence type="evidence at protein level"/>
<gene>
    <name evidence="13 15" type="primary">Adgrg2</name>
    <name evidence="12" type="synonym">Gpr64</name>
    <name evidence="10" type="synonym">Me6</name>
</gene>
<protein>
    <recommendedName>
        <fullName evidence="14">Adhesion G-protein coupled receptor G2</fullName>
    </recommendedName>
    <alternativeName>
        <fullName evidence="12">G-protein coupled receptor 64</fullName>
    </alternativeName>
    <alternativeName>
        <fullName evidence="10">Mouse epididymis-specific protein 6</fullName>
        <shortName evidence="10">Me6</shortName>
    </alternativeName>
    <component>
        <recommendedName>
            <fullName evidence="14">Adhesion G-protein coupled receptor G2, N-terminal fragment</fullName>
            <shortName evidence="14">ADGRG2 N-terminal fragment</shortName>
        </recommendedName>
    </component>
    <component>
        <recommendedName>
            <fullName evidence="14">Adhesion G-protein coupled receptor G2, C-terminal fragment</fullName>
            <shortName evidence="14">ADGRG2 C-terminal fragment</shortName>
        </recommendedName>
    </component>
</protein>
<organism>
    <name type="scientific">Mus musculus</name>
    <name type="common">Mouse</name>
    <dbReference type="NCBI Taxonomy" id="10090"/>
    <lineage>
        <taxon>Eukaryota</taxon>
        <taxon>Metazoa</taxon>
        <taxon>Chordata</taxon>
        <taxon>Craniata</taxon>
        <taxon>Vertebrata</taxon>
        <taxon>Euteleostomi</taxon>
        <taxon>Mammalia</taxon>
        <taxon>Eutheria</taxon>
        <taxon>Euarchontoglires</taxon>
        <taxon>Glires</taxon>
        <taxon>Rodentia</taxon>
        <taxon>Myomorpha</taxon>
        <taxon>Muroidea</taxon>
        <taxon>Muridae</taxon>
        <taxon>Murinae</taxon>
        <taxon>Mus</taxon>
        <taxon>Mus</taxon>
    </lineage>
</organism>